<protein>
    <recommendedName>
        <fullName evidence="1">Endoribonuclease YbeY</fullName>
        <ecNumber evidence="1">3.1.-.-</ecNumber>
    </recommendedName>
</protein>
<dbReference type="EC" id="3.1.-.-" evidence="1"/>
<dbReference type="EMBL" id="CP000246">
    <property type="protein sequence ID" value="ABG83762.1"/>
    <property type="molecule type" value="Genomic_DNA"/>
</dbReference>
<dbReference type="RefSeq" id="WP_003455166.1">
    <property type="nucleotide sequence ID" value="NC_008261.1"/>
</dbReference>
<dbReference type="SMR" id="Q0TNU2"/>
<dbReference type="STRING" id="195103.CPF_2275"/>
<dbReference type="PaxDb" id="195103-CPF_2275"/>
<dbReference type="GeneID" id="93001444"/>
<dbReference type="KEGG" id="cpf:CPF_2275"/>
<dbReference type="eggNOG" id="COG0319">
    <property type="taxonomic scope" value="Bacteria"/>
</dbReference>
<dbReference type="HOGENOM" id="CLU_106710_3_0_9"/>
<dbReference type="Proteomes" id="UP000001823">
    <property type="component" value="Chromosome"/>
</dbReference>
<dbReference type="GO" id="GO:0005737">
    <property type="term" value="C:cytoplasm"/>
    <property type="evidence" value="ECO:0007669"/>
    <property type="project" value="UniProtKB-SubCell"/>
</dbReference>
<dbReference type="GO" id="GO:0004222">
    <property type="term" value="F:metalloendopeptidase activity"/>
    <property type="evidence" value="ECO:0007669"/>
    <property type="project" value="InterPro"/>
</dbReference>
<dbReference type="GO" id="GO:0004521">
    <property type="term" value="F:RNA endonuclease activity"/>
    <property type="evidence" value="ECO:0007669"/>
    <property type="project" value="UniProtKB-UniRule"/>
</dbReference>
<dbReference type="GO" id="GO:0008270">
    <property type="term" value="F:zinc ion binding"/>
    <property type="evidence" value="ECO:0007669"/>
    <property type="project" value="UniProtKB-UniRule"/>
</dbReference>
<dbReference type="GO" id="GO:0006364">
    <property type="term" value="P:rRNA processing"/>
    <property type="evidence" value="ECO:0007669"/>
    <property type="project" value="UniProtKB-UniRule"/>
</dbReference>
<dbReference type="Gene3D" id="3.40.390.30">
    <property type="entry name" value="Metalloproteases ('zincins'), catalytic domain"/>
    <property type="match status" value="1"/>
</dbReference>
<dbReference type="HAMAP" id="MF_00009">
    <property type="entry name" value="Endoribonucl_YbeY"/>
    <property type="match status" value="1"/>
</dbReference>
<dbReference type="InterPro" id="IPR023091">
    <property type="entry name" value="MetalPrtase_cat_dom_sf_prd"/>
</dbReference>
<dbReference type="InterPro" id="IPR002036">
    <property type="entry name" value="YbeY"/>
</dbReference>
<dbReference type="InterPro" id="IPR020549">
    <property type="entry name" value="YbeY_CS"/>
</dbReference>
<dbReference type="NCBIfam" id="TIGR00043">
    <property type="entry name" value="rRNA maturation RNase YbeY"/>
    <property type="match status" value="1"/>
</dbReference>
<dbReference type="PANTHER" id="PTHR46986">
    <property type="entry name" value="ENDORIBONUCLEASE YBEY, CHLOROPLASTIC"/>
    <property type="match status" value="1"/>
</dbReference>
<dbReference type="PANTHER" id="PTHR46986:SF1">
    <property type="entry name" value="ENDORIBONUCLEASE YBEY, CHLOROPLASTIC"/>
    <property type="match status" value="1"/>
</dbReference>
<dbReference type="Pfam" id="PF02130">
    <property type="entry name" value="YbeY"/>
    <property type="match status" value="1"/>
</dbReference>
<dbReference type="SUPFAM" id="SSF55486">
    <property type="entry name" value="Metalloproteases ('zincins'), catalytic domain"/>
    <property type="match status" value="1"/>
</dbReference>
<dbReference type="PROSITE" id="PS01306">
    <property type="entry name" value="UPF0054"/>
    <property type="match status" value="1"/>
</dbReference>
<accession>Q0TNU2</accession>
<name>YBEY_CLOP1</name>
<comment type="function">
    <text evidence="1">Single strand-specific metallo-endoribonuclease involved in late-stage 70S ribosome quality control and in maturation of the 3' terminus of the 16S rRNA.</text>
</comment>
<comment type="cofactor">
    <cofactor evidence="1">
        <name>Zn(2+)</name>
        <dbReference type="ChEBI" id="CHEBI:29105"/>
    </cofactor>
    <text evidence="1">Binds 1 zinc ion.</text>
</comment>
<comment type="subcellular location">
    <subcellularLocation>
        <location evidence="1">Cytoplasm</location>
    </subcellularLocation>
</comment>
<comment type="similarity">
    <text evidence="1">Belongs to the endoribonuclease YbeY family.</text>
</comment>
<sequence length="168" mass="19905">MIFIDNRQNKFEVTEELTKKLEEVISFVLKEEKVKEDCEVSLVFVDNEEIRGINNETRGIDRATDVLSFPMIDYPEDKVYKDVYLEHEFDKCYFDGDELILGDIVLSLERTKEQSIEFNHSFEREACYLVTHSVLHLLGYDHMEEEEKARMRGREEELLGKLNITRES</sequence>
<evidence type="ECO:0000255" key="1">
    <source>
        <dbReference type="HAMAP-Rule" id="MF_00009"/>
    </source>
</evidence>
<organism>
    <name type="scientific">Clostridium perfringens (strain ATCC 13124 / DSM 756 / JCM 1290 / NCIMB 6125 / NCTC 8237 / Type A)</name>
    <dbReference type="NCBI Taxonomy" id="195103"/>
    <lineage>
        <taxon>Bacteria</taxon>
        <taxon>Bacillati</taxon>
        <taxon>Bacillota</taxon>
        <taxon>Clostridia</taxon>
        <taxon>Eubacteriales</taxon>
        <taxon>Clostridiaceae</taxon>
        <taxon>Clostridium</taxon>
    </lineage>
</organism>
<feature type="chain" id="PRO_0000284190" description="Endoribonuclease YbeY">
    <location>
        <begin position="1"/>
        <end position="168"/>
    </location>
</feature>
<feature type="binding site" evidence="1">
    <location>
        <position position="132"/>
    </location>
    <ligand>
        <name>Zn(2+)</name>
        <dbReference type="ChEBI" id="CHEBI:29105"/>
        <note>catalytic</note>
    </ligand>
</feature>
<feature type="binding site" evidence="1">
    <location>
        <position position="136"/>
    </location>
    <ligand>
        <name>Zn(2+)</name>
        <dbReference type="ChEBI" id="CHEBI:29105"/>
        <note>catalytic</note>
    </ligand>
</feature>
<feature type="binding site" evidence="1">
    <location>
        <position position="142"/>
    </location>
    <ligand>
        <name>Zn(2+)</name>
        <dbReference type="ChEBI" id="CHEBI:29105"/>
        <note>catalytic</note>
    </ligand>
</feature>
<gene>
    <name evidence="1" type="primary">ybeY</name>
    <name type="ordered locus">CPF_2275</name>
</gene>
<proteinExistence type="inferred from homology"/>
<reference key="1">
    <citation type="journal article" date="2006" name="Genome Res.">
        <title>Skewed genomic variability in strains of the toxigenic bacterial pathogen, Clostridium perfringens.</title>
        <authorList>
            <person name="Myers G.S.A."/>
            <person name="Rasko D.A."/>
            <person name="Cheung J.K."/>
            <person name="Ravel J."/>
            <person name="Seshadri R."/>
            <person name="DeBoy R.T."/>
            <person name="Ren Q."/>
            <person name="Varga J."/>
            <person name="Awad M.M."/>
            <person name="Brinkac L.M."/>
            <person name="Daugherty S.C."/>
            <person name="Haft D.H."/>
            <person name="Dodson R.J."/>
            <person name="Madupu R."/>
            <person name="Nelson W.C."/>
            <person name="Rosovitz M.J."/>
            <person name="Sullivan S.A."/>
            <person name="Khouri H."/>
            <person name="Dimitrov G.I."/>
            <person name="Watkins K.L."/>
            <person name="Mulligan S."/>
            <person name="Benton J."/>
            <person name="Radune D."/>
            <person name="Fisher D.J."/>
            <person name="Atkins H.S."/>
            <person name="Hiscox T."/>
            <person name="Jost B.H."/>
            <person name="Billington S.J."/>
            <person name="Songer J.G."/>
            <person name="McClane B.A."/>
            <person name="Titball R.W."/>
            <person name="Rood J.I."/>
            <person name="Melville S.B."/>
            <person name="Paulsen I.T."/>
        </authorList>
    </citation>
    <scope>NUCLEOTIDE SEQUENCE [LARGE SCALE GENOMIC DNA]</scope>
    <source>
        <strain>ATCC 13124 / DSM 756 / JCM 1290 / NCIMB 6125 / NCTC 8237 / S 107 / Type A</strain>
    </source>
</reference>
<keyword id="KW-0963">Cytoplasm</keyword>
<keyword id="KW-0255">Endonuclease</keyword>
<keyword id="KW-0378">Hydrolase</keyword>
<keyword id="KW-0479">Metal-binding</keyword>
<keyword id="KW-0540">Nuclease</keyword>
<keyword id="KW-0690">Ribosome biogenesis</keyword>
<keyword id="KW-0698">rRNA processing</keyword>
<keyword id="KW-0862">Zinc</keyword>